<name>RUS6_ARATH</name>
<proteinExistence type="evidence at transcript level"/>
<accession>Q93YU2</accession>
<accession>Q9LTB1</accession>
<keyword id="KW-1185">Reference proteome</keyword>
<dbReference type="EMBL" id="AB025612">
    <property type="protein sequence ID" value="BAA98149.1"/>
    <property type="status" value="ALT_SEQ"/>
    <property type="molecule type" value="Genomic_DNA"/>
</dbReference>
<dbReference type="EMBL" id="CP002688">
    <property type="protein sequence ID" value="AED95859.1"/>
    <property type="molecule type" value="Genomic_DNA"/>
</dbReference>
<dbReference type="EMBL" id="AY059766">
    <property type="protein sequence ID" value="AAL24114.1"/>
    <property type="molecule type" value="mRNA"/>
</dbReference>
<dbReference type="EMBL" id="AY142582">
    <property type="protein sequence ID" value="AAN13151.1"/>
    <property type="molecule type" value="mRNA"/>
</dbReference>
<dbReference type="RefSeq" id="NP_568713.1">
    <property type="nucleotide sequence ID" value="NM_124360.4"/>
</dbReference>
<dbReference type="BioGRID" id="20291">
    <property type="interactions" value="2"/>
</dbReference>
<dbReference type="FunCoup" id="Q93YU2">
    <property type="interactions" value="313"/>
</dbReference>
<dbReference type="IntAct" id="Q93YU2">
    <property type="interactions" value="2"/>
</dbReference>
<dbReference type="STRING" id="3702.Q93YU2"/>
<dbReference type="iPTMnet" id="Q93YU2"/>
<dbReference type="PaxDb" id="3702-AT5G49820.1"/>
<dbReference type="ProteomicsDB" id="226576"/>
<dbReference type="EnsemblPlants" id="AT5G49820.1">
    <property type="protein sequence ID" value="AT5G49820.1"/>
    <property type="gene ID" value="AT5G49820"/>
</dbReference>
<dbReference type="GeneID" id="835045"/>
<dbReference type="Gramene" id="AT5G49820.1">
    <property type="protein sequence ID" value="AT5G49820.1"/>
    <property type="gene ID" value="AT5G49820"/>
</dbReference>
<dbReference type="KEGG" id="ath:AT5G49820"/>
<dbReference type="Araport" id="AT5G49820"/>
<dbReference type="TAIR" id="AT5G49820">
    <property type="gene designation" value="RUS6"/>
</dbReference>
<dbReference type="eggNOG" id="KOG4249">
    <property type="taxonomic scope" value="Eukaryota"/>
</dbReference>
<dbReference type="HOGENOM" id="CLU_015325_6_0_1"/>
<dbReference type="InParanoid" id="Q93YU2"/>
<dbReference type="OMA" id="FMAHIAE"/>
<dbReference type="OrthoDB" id="364779at2759"/>
<dbReference type="PhylomeDB" id="Q93YU2"/>
<dbReference type="PRO" id="PR:Q93YU2"/>
<dbReference type="Proteomes" id="UP000006548">
    <property type="component" value="Chromosome 5"/>
</dbReference>
<dbReference type="ExpressionAtlas" id="Q93YU2">
    <property type="expression patterns" value="baseline and differential"/>
</dbReference>
<dbReference type="InterPro" id="IPR006968">
    <property type="entry name" value="RUS_fam"/>
</dbReference>
<dbReference type="InterPro" id="IPR055412">
    <property type="entry name" value="UVB_sens_C"/>
</dbReference>
<dbReference type="InterPro" id="IPR054549">
    <property type="entry name" value="UVB_sens_RUS_dom"/>
</dbReference>
<dbReference type="PANTHER" id="PTHR12770:SF20">
    <property type="entry name" value="PROTEIN ROOT UVB SENSITIVE 6"/>
    <property type="match status" value="1"/>
</dbReference>
<dbReference type="PANTHER" id="PTHR12770">
    <property type="entry name" value="RUS1 FAMILY PROTEIN C16ORF58"/>
    <property type="match status" value="1"/>
</dbReference>
<dbReference type="Pfam" id="PF24162">
    <property type="entry name" value="RUS6_N"/>
    <property type="match status" value="1"/>
</dbReference>
<dbReference type="Pfam" id="PF24160">
    <property type="entry name" value="UVB_sens_C"/>
    <property type="match status" value="1"/>
</dbReference>
<dbReference type="Pfam" id="PF04884">
    <property type="entry name" value="UVB_sens_prot"/>
    <property type="match status" value="1"/>
</dbReference>
<feature type="chain" id="PRO_0000430823" description="Protein root UVB sensitive 6">
    <location>
        <begin position="1"/>
        <end position="497"/>
    </location>
</feature>
<protein>
    <recommendedName>
        <fullName evidence="3">Protein root UVB sensitive 6</fullName>
    </recommendedName>
</protein>
<evidence type="ECO:0000269" key="1">
    <source>
    </source>
</evidence>
<evidence type="ECO:0000303" key="2">
    <source>
    </source>
</evidence>
<evidence type="ECO:0000303" key="3">
    <source>
    </source>
</evidence>
<evidence type="ECO:0000305" key="4"/>
<evidence type="ECO:0000312" key="5">
    <source>
        <dbReference type="Araport" id="AT5G49820"/>
    </source>
</evidence>
<evidence type="ECO:0000312" key="6">
    <source>
        <dbReference type="EMBL" id="AAL24114.1"/>
    </source>
</evidence>
<evidence type="ECO:0000312" key="7">
    <source>
        <dbReference type="EMBL" id="BAA98149.1"/>
    </source>
</evidence>
<comment type="function">
    <text evidence="1">Required for normal embryo development.</text>
</comment>
<comment type="similarity">
    <text evidence="4">Belongs to the RUS1 family.</text>
</comment>
<comment type="sequence caution">
    <conflict type="erroneous gene model prediction">
        <sequence resource="EMBL-CDS" id="BAA98149"/>
    </conflict>
</comment>
<sequence>MPSVKLTHHSPPDTIASDSVRLLSRETLRISASLASPPVDDLPPHSPPPPDSQFLHSTLRLICCEEIDGRRFKYVAESDGSGRFKKNSVRAISLESPQTPFDEVGSFLRSYVVPEGFPGSVNESYVPYMTWRALKHFFGGAMGVFTTQTLLNSVGASRNSSASAAVAINWILKDGAGRVGKMLFARQGKKFDYDLKQLRFAGDLLMELGAGVELATAAVPHLFLPLACAANVVKNVAAVTSTSTRTPIYKAFAKGENIGDVTAKGECVGNIADLMGTGFSILISKRNPSLVTTFGLLSCGYLMSSYQEVRSVVLHTLNRARFTVAVESFLKTGRVPSLQEGNIQEKIFTFPWVDDRPVMLGARFKDAFQDPSTYMAVKPFFDKERYMVTYSPTKGKVYALLKHQANSDDILKAAFHAHVLLHFMNQSKDGNPRSVEQLDPAFAPTEYELESRIAESCEMVSTSYGVFKSRAAEQGWRMSESLLNPGRARLCHVKEGE</sequence>
<gene>
    <name evidence="3" type="primary">RUS6</name>
    <name evidence="2" type="synonym">EMB1879</name>
    <name evidence="5" type="ordered locus">At5g49820</name>
    <name evidence="7" type="ORF">K21G20.3</name>
</gene>
<organism evidence="6">
    <name type="scientific">Arabidopsis thaliana</name>
    <name type="common">Mouse-ear cress</name>
    <dbReference type="NCBI Taxonomy" id="3702"/>
    <lineage>
        <taxon>Eukaryota</taxon>
        <taxon>Viridiplantae</taxon>
        <taxon>Streptophyta</taxon>
        <taxon>Embryophyta</taxon>
        <taxon>Tracheophyta</taxon>
        <taxon>Spermatophyta</taxon>
        <taxon>Magnoliopsida</taxon>
        <taxon>eudicotyledons</taxon>
        <taxon>Gunneridae</taxon>
        <taxon>Pentapetalae</taxon>
        <taxon>rosids</taxon>
        <taxon>malvids</taxon>
        <taxon>Brassicales</taxon>
        <taxon>Brassicaceae</taxon>
        <taxon>Camelineae</taxon>
        <taxon>Arabidopsis</taxon>
    </lineage>
</organism>
<reference key="1">
    <citation type="submission" date="1999-04" db="EMBL/GenBank/DDBJ databases">
        <title>Structural analysis of Arabidopsis thaliana chromosome 5. XI.</title>
        <authorList>
            <person name="Kaneko T."/>
            <person name="Katoh T."/>
            <person name="Asamizu E."/>
            <person name="Sato S."/>
            <person name="Nakamura Y."/>
            <person name="Kotani H."/>
            <person name="Tabata S."/>
        </authorList>
    </citation>
    <scope>NUCLEOTIDE SEQUENCE [LARGE SCALE GENOMIC DNA]</scope>
    <source>
        <strain>cv. Columbia</strain>
    </source>
</reference>
<reference key="2">
    <citation type="journal article" date="2017" name="Plant J.">
        <title>Araport11: a complete reannotation of the Arabidopsis thaliana reference genome.</title>
        <authorList>
            <person name="Cheng C.Y."/>
            <person name="Krishnakumar V."/>
            <person name="Chan A.P."/>
            <person name="Thibaud-Nissen F."/>
            <person name="Schobel S."/>
            <person name="Town C.D."/>
        </authorList>
    </citation>
    <scope>GENOME REANNOTATION</scope>
    <source>
        <strain>cv. Columbia</strain>
    </source>
</reference>
<reference key="3">
    <citation type="journal article" date="2003" name="Science">
        <title>Empirical analysis of transcriptional activity in the Arabidopsis genome.</title>
        <authorList>
            <person name="Yamada K."/>
            <person name="Lim J."/>
            <person name="Dale J.M."/>
            <person name="Chen H."/>
            <person name="Shinn P."/>
            <person name="Palm C.J."/>
            <person name="Southwick A.M."/>
            <person name="Wu H.C."/>
            <person name="Kim C.J."/>
            <person name="Nguyen M."/>
            <person name="Pham P.K."/>
            <person name="Cheuk R.F."/>
            <person name="Karlin-Newmann G."/>
            <person name="Liu S.X."/>
            <person name="Lam B."/>
            <person name="Sakano H."/>
            <person name="Wu T."/>
            <person name="Yu G."/>
            <person name="Miranda M."/>
            <person name="Quach H.L."/>
            <person name="Tripp M."/>
            <person name="Chang C.H."/>
            <person name="Lee J.M."/>
            <person name="Toriumi M.J."/>
            <person name="Chan M.M."/>
            <person name="Tang C.C."/>
            <person name="Onodera C.S."/>
            <person name="Deng J.M."/>
            <person name="Akiyama K."/>
            <person name="Ansari Y."/>
            <person name="Arakawa T."/>
            <person name="Banh J."/>
            <person name="Banno F."/>
            <person name="Bowser L."/>
            <person name="Brooks S.Y."/>
            <person name="Carninci P."/>
            <person name="Chao Q."/>
            <person name="Choy N."/>
            <person name="Enju A."/>
            <person name="Goldsmith A.D."/>
            <person name="Gurjal M."/>
            <person name="Hansen N.F."/>
            <person name="Hayashizaki Y."/>
            <person name="Johnson-Hopson C."/>
            <person name="Hsuan V.W."/>
            <person name="Iida K."/>
            <person name="Karnes M."/>
            <person name="Khan S."/>
            <person name="Koesema E."/>
            <person name="Ishida J."/>
            <person name="Jiang P.X."/>
            <person name="Jones T."/>
            <person name="Kawai J."/>
            <person name="Kamiya A."/>
            <person name="Meyers C."/>
            <person name="Nakajima M."/>
            <person name="Narusaka M."/>
            <person name="Seki M."/>
            <person name="Sakurai T."/>
            <person name="Satou M."/>
            <person name="Tamse R."/>
            <person name="Vaysberg M."/>
            <person name="Wallender E.K."/>
            <person name="Wong C."/>
            <person name="Yamamura Y."/>
            <person name="Yuan S."/>
            <person name="Shinozaki K."/>
            <person name="Davis R.W."/>
            <person name="Theologis A."/>
            <person name="Ecker J.R."/>
        </authorList>
    </citation>
    <scope>NUCLEOTIDE SEQUENCE [LARGE SCALE MRNA]</scope>
    <source>
        <strain>cv. Columbia</strain>
    </source>
</reference>
<reference key="4">
    <citation type="journal article" date="2004" name="Plant Physiol.">
        <title>Identification of genes required for embryo development in Arabidopsis.</title>
        <authorList>
            <person name="Tzafrir I."/>
            <person name="Pena-Muralla R."/>
            <person name="Dickerman A."/>
            <person name="Berg M."/>
            <person name="Rogers R."/>
            <person name="Hutchens S."/>
            <person name="Sweeney T.C."/>
            <person name="McElver J."/>
            <person name="Aux G."/>
            <person name="Patton D."/>
            <person name="Meinke D."/>
        </authorList>
    </citation>
    <scope>FUNCTION</scope>
</reference>
<reference key="5">
    <citation type="journal article" date="2009" name="Plant Physiol.">
        <title>ROOT UV-B SENSITIVE2 acts with ROOT UV-B SENSITIVE1 in a root ultraviolet B-sensing pathway.</title>
        <authorList>
            <person name="Leasure C.D."/>
            <person name="Tong H."/>
            <person name="Yuen G."/>
            <person name="Hou X."/>
            <person name="Sun X."/>
            <person name="He Z.H."/>
        </authorList>
    </citation>
    <scope>GENE FAMILY</scope>
    <scope>NOMENCLATURE</scope>
    <source>
        <strain>cv. Columbia</strain>
    </source>
</reference>